<feature type="chain" id="PRO_0000357747" description="NADH-quinone oxidoreductase subunit D">
    <location>
        <begin position="1"/>
        <end position="406"/>
    </location>
</feature>
<reference key="1">
    <citation type="submission" date="2007-05" db="EMBL/GenBank/DDBJ databases">
        <title>Complete sequence of chromosome of Acidiphilium cryptum JF-5.</title>
        <authorList>
            <consortium name="US DOE Joint Genome Institute"/>
            <person name="Copeland A."/>
            <person name="Lucas S."/>
            <person name="Lapidus A."/>
            <person name="Barry K."/>
            <person name="Detter J.C."/>
            <person name="Glavina del Rio T."/>
            <person name="Hammon N."/>
            <person name="Israni S."/>
            <person name="Dalin E."/>
            <person name="Tice H."/>
            <person name="Pitluck S."/>
            <person name="Sims D."/>
            <person name="Brettin T."/>
            <person name="Bruce D."/>
            <person name="Han C."/>
            <person name="Schmutz J."/>
            <person name="Larimer F."/>
            <person name="Land M."/>
            <person name="Hauser L."/>
            <person name="Kyrpides N."/>
            <person name="Kim E."/>
            <person name="Magnuson T."/>
            <person name="Richardson P."/>
        </authorList>
    </citation>
    <scope>NUCLEOTIDE SEQUENCE [LARGE SCALE GENOMIC DNA]</scope>
    <source>
        <strain>JF-5</strain>
    </source>
</reference>
<gene>
    <name evidence="1" type="primary">nuoD</name>
    <name type="ordered locus">Acry_0924</name>
</gene>
<organism>
    <name type="scientific">Acidiphilium cryptum (strain JF-5)</name>
    <dbReference type="NCBI Taxonomy" id="349163"/>
    <lineage>
        <taxon>Bacteria</taxon>
        <taxon>Pseudomonadati</taxon>
        <taxon>Pseudomonadota</taxon>
        <taxon>Alphaproteobacteria</taxon>
        <taxon>Acetobacterales</taxon>
        <taxon>Acidocellaceae</taxon>
        <taxon>Acidiphilium</taxon>
    </lineage>
</organism>
<dbReference type="EC" id="7.1.1.-" evidence="1"/>
<dbReference type="EMBL" id="CP000697">
    <property type="protein sequence ID" value="ABQ30143.1"/>
    <property type="molecule type" value="Genomic_DNA"/>
</dbReference>
<dbReference type="RefSeq" id="WP_011941872.1">
    <property type="nucleotide sequence ID" value="NC_009484.1"/>
</dbReference>
<dbReference type="SMR" id="A5FX11"/>
<dbReference type="STRING" id="349163.Acry_0924"/>
<dbReference type="KEGG" id="acr:Acry_0924"/>
<dbReference type="eggNOG" id="COG0649">
    <property type="taxonomic scope" value="Bacteria"/>
</dbReference>
<dbReference type="HOGENOM" id="CLU_015134_1_1_5"/>
<dbReference type="Proteomes" id="UP000000245">
    <property type="component" value="Chromosome"/>
</dbReference>
<dbReference type="GO" id="GO:0005886">
    <property type="term" value="C:plasma membrane"/>
    <property type="evidence" value="ECO:0007669"/>
    <property type="project" value="UniProtKB-SubCell"/>
</dbReference>
<dbReference type="GO" id="GO:0051287">
    <property type="term" value="F:NAD binding"/>
    <property type="evidence" value="ECO:0007669"/>
    <property type="project" value="InterPro"/>
</dbReference>
<dbReference type="GO" id="GO:0050136">
    <property type="term" value="F:NADH:ubiquinone reductase (non-electrogenic) activity"/>
    <property type="evidence" value="ECO:0007669"/>
    <property type="project" value="UniProtKB-UniRule"/>
</dbReference>
<dbReference type="GO" id="GO:0048038">
    <property type="term" value="F:quinone binding"/>
    <property type="evidence" value="ECO:0007669"/>
    <property type="project" value="UniProtKB-KW"/>
</dbReference>
<dbReference type="FunFam" id="1.10.645.10:FF:000005">
    <property type="entry name" value="NADH-quinone oxidoreductase subunit D"/>
    <property type="match status" value="1"/>
</dbReference>
<dbReference type="Gene3D" id="1.10.645.10">
    <property type="entry name" value="Cytochrome-c3 Hydrogenase, chain B"/>
    <property type="match status" value="1"/>
</dbReference>
<dbReference type="HAMAP" id="MF_01358">
    <property type="entry name" value="NDH1_NuoD"/>
    <property type="match status" value="1"/>
</dbReference>
<dbReference type="InterPro" id="IPR001135">
    <property type="entry name" value="NADH_Q_OxRdtase_suD"/>
</dbReference>
<dbReference type="InterPro" id="IPR014029">
    <property type="entry name" value="NADH_UbQ_OxRdtase_49kDa_CS"/>
</dbReference>
<dbReference type="InterPro" id="IPR022885">
    <property type="entry name" value="NDH1_su_D/H"/>
</dbReference>
<dbReference type="InterPro" id="IPR029014">
    <property type="entry name" value="NiFe-Hase_large"/>
</dbReference>
<dbReference type="NCBIfam" id="TIGR01962">
    <property type="entry name" value="NuoD"/>
    <property type="match status" value="1"/>
</dbReference>
<dbReference type="NCBIfam" id="NF004739">
    <property type="entry name" value="PRK06075.1"/>
    <property type="match status" value="1"/>
</dbReference>
<dbReference type="PANTHER" id="PTHR11993:SF10">
    <property type="entry name" value="NADH DEHYDROGENASE [UBIQUINONE] IRON-SULFUR PROTEIN 2, MITOCHONDRIAL"/>
    <property type="match status" value="1"/>
</dbReference>
<dbReference type="PANTHER" id="PTHR11993">
    <property type="entry name" value="NADH-UBIQUINONE OXIDOREDUCTASE 49 KDA SUBUNIT"/>
    <property type="match status" value="1"/>
</dbReference>
<dbReference type="Pfam" id="PF00346">
    <property type="entry name" value="Complex1_49kDa"/>
    <property type="match status" value="1"/>
</dbReference>
<dbReference type="SUPFAM" id="SSF56762">
    <property type="entry name" value="HydB/Nqo4-like"/>
    <property type="match status" value="1"/>
</dbReference>
<dbReference type="PROSITE" id="PS00535">
    <property type="entry name" value="COMPLEX1_49K"/>
    <property type="match status" value="1"/>
</dbReference>
<sequence>MSGGMQNGTQETERRVIDINDRHTVNVGPQHPATHGVLRLIMELEGETVTRADPHIGLLHRGTEKLIEYKSYLQAVPYFDRLDYVSPMCCEHAFALATERLLGVKVPERAQWIRVLFAEITRILNHLLNAVHLALDIGAQSPSLWGYEEREKLLTFHEAVSGARFHANYFRPGGVSKDMPTGLAEQIWEWSEKFPKFLDDLQSLLNENRIFRQRLVDIGVISAEDALAMGFSGPNLRASGIAWDLRRAQPYDKYDEVDFDIPVGRHGDSFDRYLVRIREMAESLKIIRQALKAMPEGPIKVQDHKITPPKRAEMKRSMEALIHHFKLYTEGYHVPAGTTYTAVEAPKGEFGVYLVADGSNRPYRCKIRATGFSHLQAMNLMSKGHLLADAIAVLGSIDIVFGEVDR</sequence>
<comment type="function">
    <text evidence="1">NDH-1 shuttles electrons from NADH, via FMN and iron-sulfur (Fe-S) centers, to quinones in the respiratory chain. The immediate electron acceptor for the enzyme in this species is believed to be ubiquinone. Couples the redox reaction to proton translocation (for every two electrons transferred, four hydrogen ions are translocated across the cytoplasmic membrane), and thus conserves the redox energy in a proton gradient.</text>
</comment>
<comment type="catalytic activity">
    <reaction evidence="1">
        <text>a quinone + NADH + 5 H(+)(in) = a quinol + NAD(+) + 4 H(+)(out)</text>
        <dbReference type="Rhea" id="RHEA:57888"/>
        <dbReference type="ChEBI" id="CHEBI:15378"/>
        <dbReference type="ChEBI" id="CHEBI:24646"/>
        <dbReference type="ChEBI" id="CHEBI:57540"/>
        <dbReference type="ChEBI" id="CHEBI:57945"/>
        <dbReference type="ChEBI" id="CHEBI:132124"/>
    </reaction>
</comment>
<comment type="subunit">
    <text evidence="1">NDH-1 is composed of 14 different subunits. Subunits NuoB, C, D, E, F, and G constitute the peripheral sector of the complex.</text>
</comment>
<comment type="subcellular location">
    <subcellularLocation>
        <location evidence="1">Cell inner membrane</location>
        <topology evidence="1">Peripheral membrane protein</topology>
        <orientation evidence="1">Cytoplasmic side</orientation>
    </subcellularLocation>
</comment>
<comment type="similarity">
    <text evidence="1">Belongs to the complex I 49 kDa subunit family.</text>
</comment>
<accession>A5FX11</accession>
<proteinExistence type="inferred from homology"/>
<protein>
    <recommendedName>
        <fullName evidence="1">NADH-quinone oxidoreductase subunit D</fullName>
        <ecNumber evidence="1">7.1.1.-</ecNumber>
    </recommendedName>
    <alternativeName>
        <fullName evidence="1">NADH dehydrogenase I subunit D</fullName>
    </alternativeName>
    <alternativeName>
        <fullName evidence="1">NDH-1 subunit D</fullName>
    </alternativeName>
</protein>
<keyword id="KW-0997">Cell inner membrane</keyword>
<keyword id="KW-1003">Cell membrane</keyword>
<keyword id="KW-0472">Membrane</keyword>
<keyword id="KW-0520">NAD</keyword>
<keyword id="KW-0874">Quinone</keyword>
<keyword id="KW-1185">Reference proteome</keyword>
<keyword id="KW-1278">Translocase</keyword>
<keyword id="KW-0813">Transport</keyword>
<keyword id="KW-0830">Ubiquinone</keyword>
<evidence type="ECO:0000255" key="1">
    <source>
        <dbReference type="HAMAP-Rule" id="MF_01358"/>
    </source>
</evidence>
<name>NUOD_ACICJ</name>